<evidence type="ECO:0000255" key="1">
    <source>
        <dbReference type="HAMAP-Rule" id="MF_01219"/>
    </source>
</evidence>
<reference key="1">
    <citation type="journal article" date="2008" name="J. Bacteriol.">
        <title>Genome sequence of a nephritogenic and highly transformable M49 strain of Streptococcus pyogenes.</title>
        <authorList>
            <person name="McShan W.M."/>
            <person name="Ferretti J.J."/>
            <person name="Karasawa T."/>
            <person name="Suvorov A.N."/>
            <person name="Lin S."/>
            <person name="Qin B."/>
            <person name="Jia H."/>
            <person name="Kenton S."/>
            <person name="Najar F."/>
            <person name="Wu H."/>
            <person name="Scott J."/>
            <person name="Roe B.A."/>
            <person name="Savic D.J."/>
        </authorList>
    </citation>
    <scope>NUCLEOTIDE SEQUENCE [LARGE SCALE GENOMIC DNA]</scope>
    <source>
        <strain>NZ131</strain>
    </source>
</reference>
<name>PYRR_STRPZ</name>
<keyword id="KW-0328">Glycosyltransferase</keyword>
<keyword id="KW-0694">RNA-binding</keyword>
<keyword id="KW-0804">Transcription</keyword>
<keyword id="KW-0805">Transcription regulation</keyword>
<keyword id="KW-0806">Transcription termination</keyword>
<keyword id="KW-0808">Transferase</keyword>
<accession>B5XKV8</accession>
<feature type="chain" id="PRO_1000139212" description="Bifunctional protein PyrR">
    <location>
        <begin position="1"/>
        <end position="173"/>
    </location>
</feature>
<feature type="short sequence motif" description="PRPP-binding" evidence="1">
    <location>
        <begin position="93"/>
        <end position="105"/>
    </location>
</feature>
<organism>
    <name type="scientific">Streptococcus pyogenes serotype M49 (strain NZ131)</name>
    <dbReference type="NCBI Taxonomy" id="471876"/>
    <lineage>
        <taxon>Bacteria</taxon>
        <taxon>Bacillati</taxon>
        <taxon>Bacillota</taxon>
        <taxon>Bacilli</taxon>
        <taxon>Lactobacillales</taxon>
        <taxon>Streptococcaceae</taxon>
        <taxon>Streptococcus</taxon>
    </lineage>
</organism>
<proteinExistence type="inferred from homology"/>
<protein>
    <recommendedName>
        <fullName evidence="1">Bifunctional protein PyrR</fullName>
    </recommendedName>
    <domain>
        <recommendedName>
            <fullName evidence="1">Pyrimidine operon regulatory protein</fullName>
        </recommendedName>
    </domain>
    <domain>
        <recommendedName>
            <fullName evidence="1">Uracil phosphoribosyltransferase</fullName>
            <shortName evidence="1">UPRTase</shortName>
            <ecNumber evidence="1">2.4.2.9</ecNumber>
        </recommendedName>
    </domain>
</protein>
<sequence>MKTKEIVDDVTMKRAITRITYEIIERNKQLDNVVLAGIKTRGVFLARRIQERLHQLEGLDLPIGELDPKPFRDDMRVEEDTTLMSVDITGKDVILIDDVLYTGRTIRAAIDNLVSLGRPARVSLAVLVDRGHRELPIRADYVGKNIPTSSVEEIVVEVVEVDGRDRVSIIDPT</sequence>
<dbReference type="EC" id="2.4.2.9" evidence="1"/>
<dbReference type="EMBL" id="CP000829">
    <property type="protein sequence ID" value="ACI60970.1"/>
    <property type="molecule type" value="Genomic_DNA"/>
</dbReference>
<dbReference type="SMR" id="B5XKV8"/>
<dbReference type="KEGG" id="soz:Spy49_0650"/>
<dbReference type="HOGENOM" id="CLU_094234_2_1_9"/>
<dbReference type="Proteomes" id="UP000001039">
    <property type="component" value="Chromosome"/>
</dbReference>
<dbReference type="GO" id="GO:0003723">
    <property type="term" value="F:RNA binding"/>
    <property type="evidence" value="ECO:0007669"/>
    <property type="project" value="UniProtKB-UniRule"/>
</dbReference>
<dbReference type="GO" id="GO:0004845">
    <property type="term" value="F:uracil phosphoribosyltransferase activity"/>
    <property type="evidence" value="ECO:0007669"/>
    <property type="project" value="UniProtKB-UniRule"/>
</dbReference>
<dbReference type="GO" id="GO:0006353">
    <property type="term" value="P:DNA-templated transcription termination"/>
    <property type="evidence" value="ECO:0007669"/>
    <property type="project" value="UniProtKB-UniRule"/>
</dbReference>
<dbReference type="CDD" id="cd06223">
    <property type="entry name" value="PRTases_typeI"/>
    <property type="match status" value="1"/>
</dbReference>
<dbReference type="FunFam" id="3.40.50.2020:FF:000020">
    <property type="entry name" value="Bifunctional protein PyrR"/>
    <property type="match status" value="1"/>
</dbReference>
<dbReference type="Gene3D" id="3.40.50.2020">
    <property type="match status" value="1"/>
</dbReference>
<dbReference type="HAMAP" id="MF_01219">
    <property type="entry name" value="PyrR"/>
    <property type="match status" value="1"/>
</dbReference>
<dbReference type="InterPro" id="IPR000836">
    <property type="entry name" value="PRibTrfase_dom"/>
</dbReference>
<dbReference type="InterPro" id="IPR029057">
    <property type="entry name" value="PRTase-like"/>
</dbReference>
<dbReference type="InterPro" id="IPR023050">
    <property type="entry name" value="PyrR"/>
</dbReference>
<dbReference type="InterPro" id="IPR050137">
    <property type="entry name" value="PyrR_bifunctional"/>
</dbReference>
<dbReference type="NCBIfam" id="NF003548">
    <property type="entry name" value="PRK05205.1-4"/>
    <property type="match status" value="1"/>
</dbReference>
<dbReference type="NCBIfam" id="NF003549">
    <property type="entry name" value="PRK05205.1-5"/>
    <property type="match status" value="1"/>
</dbReference>
<dbReference type="PANTHER" id="PTHR11608">
    <property type="entry name" value="BIFUNCTIONAL PROTEIN PYRR"/>
    <property type="match status" value="1"/>
</dbReference>
<dbReference type="PANTHER" id="PTHR11608:SF0">
    <property type="entry name" value="BIFUNCTIONAL PROTEIN PYRR"/>
    <property type="match status" value="1"/>
</dbReference>
<dbReference type="Pfam" id="PF00156">
    <property type="entry name" value="Pribosyltran"/>
    <property type="match status" value="1"/>
</dbReference>
<dbReference type="SUPFAM" id="SSF53271">
    <property type="entry name" value="PRTase-like"/>
    <property type="match status" value="1"/>
</dbReference>
<comment type="function">
    <text evidence="1">Regulates transcriptional attenuation of the pyrimidine nucleotide (pyr) operon by binding in a uridine-dependent manner to specific sites on pyr mRNA. This disrupts an antiterminator hairpin in the RNA and favors formation of a downstream transcription terminator, leading to a reduced expression of downstream genes.</text>
</comment>
<comment type="function">
    <text evidence="1">Also displays a weak uracil phosphoribosyltransferase activity which is not physiologically significant.</text>
</comment>
<comment type="catalytic activity">
    <reaction evidence="1">
        <text>UMP + diphosphate = 5-phospho-alpha-D-ribose 1-diphosphate + uracil</text>
        <dbReference type="Rhea" id="RHEA:13017"/>
        <dbReference type="ChEBI" id="CHEBI:17568"/>
        <dbReference type="ChEBI" id="CHEBI:33019"/>
        <dbReference type="ChEBI" id="CHEBI:57865"/>
        <dbReference type="ChEBI" id="CHEBI:58017"/>
        <dbReference type="EC" id="2.4.2.9"/>
    </reaction>
</comment>
<comment type="subunit">
    <text evidence="1">Homodimer and homohexamer; in equilibrium.</text>
</comment>
<comment type="similarity">
    <text evidence="1">Belongs to the purine/pyrimidine phosphoribosyltransferase family. PyrR subfamily.</text>
</comment>
<gene>
    <name evidence="1" type="primary">pyrR</name>
    <name type="ordered locus">Spy49_0650</name>
</gene>